<evidence type="ECO:0000255" key="1">
    <source>
        <dbReference type="HAMAP-Rule" id="MF_00004"/>
    </source>
</evidence>
<feature type="chain" id="PRO_1000116165" description="Adenine phosphoribosyltransferase">
    <location>
        <begin position="1"/>
        <end position="170"/>
    </location>
</feature>
<gene>
    <name evidence="1" type="primary">apt</name>
    <name type="ordered locus">BCAH187_A4542</name>
</gene>
<accession>B7HQG7</accession>
<organism>
    <name type="scientific">Bacillus cereus (strain AH187)</name>
    <dbReference type="NCBI Taxonomy" id="405534"/>
    <lineage>
        <taxon>Bacteria</taxon>
        <taxon>Bacillati</taxon>
        <taxon>Bacillota</taxon>
        <taxon>Bacilli</taxon>
        <taxon>Bacillales</taxon>
        <taxon>Bacillaceae</taxon>
        <taxon>Bacillus</taxon>
        <taxon>Bacillus cereus group</taxon>
    </lineage>
</organism>
<sequence>MDFKQHIAIVPDYPKEGIVFKDITPLMNDGKAYKAATDAIVEYAKERDIDLVVGPEARGFIIGCPVSYALEVGFAPVRKLGKLPREVITVDYGKEYGKDVLTIHKDAIKPGQRVLITDDLLATGGTIEATIKLVEELGGVVAGIAFLVELTYLDGRKMLDGYDVLVLEKY</sequence>
<reference key="1">
    <citation type="submission" date="2008-10" db="EMBL/GenBank/DDBJ databases">
        <title>Genome sequence of Bacillus cereus AH187.</title>
        <authorList>
            <person name="Dodson R.J."/>
            <person name="Durkin A.S."/>
            <person name="Rosovitz M.J."/>
            <person name="Rasko D.A."/>
            <person name="Kolsto A.B."/>
            <person name="Okstad O.A."/>
            <person name="Ravel J."/>
            <person name="Sutton G."/>
        </authorList>
    </citation>
    <scope>NUCLEOTIDE SEQUENCE [LARGE SCALE GENOMIC DNA]</scope>
    <source>
        <strain>AH187</strain>
    </source>
</reference>
<name>APT_BACC7</name>
<keyword id="KW-0963">Cytoplasm</keyword>
<keyword id="KW-0328">Glycosyltransferase</keyword>
<keyword id="KW-0660">Purine salvage</keyword>
<keyword id="KW-0808">Transferase</keyword>
<protein>
    <recommendedName>
        <fullName evidence="1">Adenine phosphoribosyltransferase</fullName>
        <shortName evidence="1">APRT</shortName>
        <ecNumber evidence="1">2.4.2.7</ecNumber>
    </recommendedName>
</protein>
<comment type="function">
    <text evidence="1">Catalyzes a salvage reaction resulting in the formation of AMP, that is energically less costly than de novo synthesis.</text>
</comment>
<comment type="catalytic activity">
    <reaction evidence="1">
        <text>AMP + diphosphate = 5-phospho-alpha-D-ribose 1-diphosphate + adenine</text>
        <dbReference type="Rhea" id="RHEA:16609"/>
        <dbReference type="ChEBI" id="CHEBI:16708"/>
        <dbReference type="ChEBI" id="CHEBI:33019"/>
        <dbReference type="ChEBI" id="CHEBI:58017"/>
        <dbReference type="ChEBI" id="CHEBI:456215"/>
        <dbReference type="EC" id="2.4.2.7"/>
    </reaction>
</comment>
<comment type="pathway">
    <text evidence="1">Purine metabolism; AMP biosynthesis via salvage pathway; AMP from adenine: step 1/1.</text>
</comment>
<comment type="subunit">
    <text evidence="1">Homodimer.</text>
</comment>
<comment type="subcellular location">
    <subcellularLocation>
        <location evidence="1">Cytoplasm</location>
    </subcellularLocation>
</comment>
<comment type="similarity">
    <text evidence="1">Belongs to the purine/pyrimidine phosphoribosyltransferase family.</text>
</comment>
<dbReference type="EC" id="2.4.2.7" evidence="1"/>
<dbReference type="EMBL" id="CP001177">
    <property type="protein sequence ID" value="ACJ81235.1"/>
    <property type="molecule type" value="Genomic_DNA"/>
</dbReference>
<dbReference type="SMR" id="B7HQG7"/>
<dbReference type="KEGG" id="bcr:BCAH187_A4542"/>
<dbReference type="HOGENOM" id="CLU_063339_3_0_9"/>
<dbReference type="UniPathway" id="UPA00588">
    <property type="reaction ID" value="UER00646"/>
</dbReference>
<dbReference type="Proteomes" id="UP000002214">
    <property type="component" value="Chromosome"/>
</dbReference>
<dbReference type="GO" id="GO:0005737">
    <property type="term" value="C:cytoplasm"/>
    <property type="evidence" value="ECO:0007669"/>
    <property type="project" value="UniProtKB-SubCell"/>
</dbReference>
<dbReference type="GO" id="GO:0002055">
    <property type="term" value="F:adenine binding"/>
    <property type="evidence" value="ECO:0007669"/>
    <property type="project" value="TreeGrafter"/>
</dbReference>
<dbReference type="GO" id="GO:0003999">
    <property type="term" value="F:adenine phosphoribosyltransferase activity"/>
    <property type="evidence" value="ECO:0007669"/>
    <property type="project" value="UniProtKB-UniRule"/>
</dbReference>
<dbReference type="GO" id="GO:0016208">
    <property type="term" value="F:AMP binding"/>
    <property type="evidence" value="ECO:0007669"/>
    <property type="project" value="TreeGrafter"/>
</dbReference>
<dbReference type="GO" id="GO:0006168">
    <property type="term" value="P:adenine salvage"/>
    <property type="evidence" value="ECO:0007669"/>
    <property type="project" value="InterPro"/>
</dbReference>
<dbReference type="GO" id="GO:0044209">
    <property type="term" value="P:AMP salvage"/>
    <property type="evidence" value="ECO:0007669"/>
    <property type="project" value="UniProtKB-UniRule"/>
</dbReference>
<dbReference type="GO" id="GO:0006166">
    <property type="term" value="P:purine ribonucleoside salvage"/>
    <property type="evidence" value="ECO:0007669"/>
    <property type="project" value="UniProtKB-KW"/>
</dbReference>
<dbReference type="CDD" id="cd06223">
    <property type="entry name" value="PRTases_typeI"/>
    <property type="match status" value="1"/>
</dbReference>
<dbReference type="FunFam" id="3.40.50.2020:FF:000004">
    <property type="entry name" value="Adenine phosphoribosyltransferase"/>
    <property type="match status" value="1"/>
</dbReference>
<dbReference type="Gene3D" id="3.40.50.2020">
    <property type="match status" value="1"/>
</dbReference>
<dbReference type="HAMAP" id="MF_00004">
    <property type="entry name" value="Aden_phosphoribosyltr"/>
    <property type="match status" value="1"/>
</dbReference>
<dbReference type="InterPro" id="IPR005764">
    <property type="entry name" value="Ade_phspho_trans"/>
</dbReference>
<dbReference type="InterPro" id="IPR000836">
    <property type="entry name" value="PRibTrfase_dom"/>
</dbReference>
<dbReference type="InterPro" id="IPR029057">
    <property type="entry name" value="PRTase-like"/>
</dbReference>
<dbReference type="InterPro" id="IPR050054">
    <property type="entry name" value="UPRTase/APRTase"/>
</dbReference>
<dbReference type="NCBIfam" id="TIGR01090">
    <property type="entry name" value="apt"/>
    <property type="match status" value="1"/>
</dbReference>
<dbReference type="NCBIfam" id="NF002633">
    <property type="entry name" value="PRK02304.1-2"/>
    <property type="match status" value="1"/>
</dbReference>
<dbReference type="NCBIfam" id="NF002634">
    <property type="entry name" value="PRK02304.1-3"/>
    <property type="match status" value="1"/>
</dbReference>
<dbReference type="NCBIfam" id="NF002636">
    <property type="entry name" value="PRK02304.1-5"/>
    <property type="match status" value="1"/>
</dbReference>
<dbReference type="PANTHER" id="PTHR32315">
    <property type="entry name" value="ADENINE PHOSPHORIBOSYLTRANSFERASE"/>
    <property type="match status" value="1"/>
</dbReference>
<dbReference type="PANTHER" id="PTHR32315:SF3">
    <property type="entry name" value="ADENINE PHOSPHORIBOSYLTRANSFERASE"/>
    <property type="match status" value="1"/>
</dbReference>
<dbReference type="Pfam" id="PF00156">
    <property type="entry name" value="Pribosyltran"/>
    <property type="match status" value="1"/>
</dbReference>
<dbReference type="SUPFAM" id="SSF53271">
    <property type="entry name" value="PRTase-like"/>
    <property type="match status" value="1"/>
</dbReference>
<proteinExistence type="inferred from homology"/>